<name>FTSL_XANCP</name>
<sequence>MSRLLLIVLLACSIASAIGVVYMRHMHRKLFVQLSKLEHSRDELNIEFGRLQLEQATWAESNRVDQVSRERIGMKFPETSDIVVIRP</sequence>
<feature type="chain" id="PRO_0000414574" description="Cell division protein FtsL">
    <location>
        <begin position="1"/>
        <end position="87"/>
    </location>
</feature>
<feature type="topological domain" description="Cytoplasmic" evidence="1">
    <location>
        <begin position="1"/>
        <end position="3"/>
    </location>
</feature>
<feature type="transmembrane region" description="Helical" evidence="1">
    <location>
        <begin position="4"/>
        <end position="23"/>
    </location>
</feature>
<feature type="topological domain" description="Periplasmic" evidence="1">
    <location>
        <begin position="24"/>
        <end position="87"/>
    </location>
</feature>
<gene>
    <name evidence="1" type="primary">ftsL</name>
    <name type="ordered locus">XCC0719</name>
</gene>
<accession>Q8PCK6</accession>
<evidence type="ECO:0000255" key="1">
    <source>
        <dbReference type="HAMAP-Rule" id="MF_00910"/>
    </source>
</evidence>
<proteinExistence type="inferred from homology"/>
<dbReference type="EMBL" id="AE008922">
    <property type="protein sequence ID" value="AAM40034.1"/>
    <property type="molecule type" value="Genomic_DNA"/>
</dbReference>
<dbReference type="RefSeq" id="NP_636110.1">
    <property type="nucleotide sequence ID" value="NC_003902.1"/>
</dbReference>
<dbReference type="RefSeq" id="WP_011035956.1">
    <property type="nucleotide sequence ID" value="NC_003902.1"/>
</dbReference>
<dbReference type="SMR" id="Q8PCK6"/>
<dbReference type="STRING" id="190485.XCC0719"/>
<dbReference type="EnsemblBacteria" id="AAM40034">
    <property type="protein sequence ID" value="AAM40034"/>
    <property type="gene ID" value="XCC0719"/>
</dbReference>
<dbReference type="GeneID" id="58014714"/>
<dbReference type="KEGG" id="xcc:XCC0719"/>
<dbReference type="PATRIC" id="fig|190485.4.peg.783"/>
<dbReference type="eggNOG" id="COG3116">
    <property type="taxonomic scope" value="Bacteria"/>
</dbReference>
<dbReference type="HOGENOM" id="CLU_156524_1_0_6"/>
<dbReference type="OrthoDB" id="5298556at2"/>
<dbReference type="Proteomes" id="UP000001010">
    <property type="component" value="Chromosome"/>
</dbReference>
<dbReference type="GO" id="GO:0032153">
    <property type="term" value="C:cell division site"/>
    <property type="evidence" value="ECO:0000318"/>
    <property type="project" value="GO_Central"/>
</dbReference>
<dbReference type="GO" id="GO:0005886">
    <property type="term" value="C:plasma membrane"/>
    <property type="evidence" value="ECO:0000318"/>
    <property type="project" value="GO_Central"/>
</dbReference>
<dbReference type="GO" id="GO:0043093">
    <property type="term" value="P:FtsZ-dependent cytokinesis"/>
    <property type="evidence" value="ECO:0000318"/>
    <property type="project" value="GO_Central"/>
</dbReference>
<dbReference type="HAMAP" id="MF_00910">
    <property type="entry name" value="FtsL"/>
    <property type="match status" value="1"/>
</dbReference>
<dbReference type="InterPro" id="IPR011922">
    <property type="entry name" value="Cell_div_FtsL"/>
</dbReference>
<dbReference type="NCBIfam" id="TIGR02209">
    <property type="entry name" value="ftsL_broad"/>
    <property type="match status" value="1"/>
</dbReference>
<dbReference type="PANTHER" id="PTHR37479">
    <property type="entry name" value="CELL DIVISION PROTEIN FTSL"/>
    <property type="match status" value="1"/>
</dbReference>
<dbReference type="PANTHER" id="PTHR37479:SF1">
    <property type="entry name" value="CELL DIVISION PROTEIN FTSL"/>
    <property type="match status" value="1"/>
</dbReference>
<dbReference type="Pfam" id="PF04999">
    <property type="entry name" value="FtsL"/>
    <property type="match status" value="1"/>
</dbReference>
<reference key="1">
    <citation type="journal article" date="2002" name="Nature">
        <title>Comparison of the genomes of two Xanthomonas pathogens with differing host specificities.</title>
        <authorList>
            <person name="da Silva A.C.R."/>
            <person name="Ferro J.A."/>
            <person name="Reinach F.C."/>
            <person name="Farah C.S."/>
            <person name="Furlan L.R."/>
            <person name="Quaggio R.B."/>
            <person name="Monteiro-Vitorello C.B."/>
            <person name="Van Sluys M.A."/>
            <person name="Almeida N.F. Jr."/>
            <person name="Alves L.M.C."/>
            <person name="do Amaral A.M."/>
            <person name="Bertolini M.C."/>
            <person name="Camargo L.E.A."/>
            <person name="Camarotte G."/>
            <person name="Cannavan F."/>
            <person name="Cardozo J."/>
            <person name="Chambergo F."/>
            <person name="Ciapina L.P."/>
            <person name="Cicarelli R.M.B."/>
            <person name="Coutinho L.L."/>
            <person name="Cursino-Santos J.R."/>
            <person name="El-Dorry H."/>
            <person name="Faria J.B."/>
            <person name="Ferreira A.J.S."/>
            <person name="Ferreira R.C.C."/>
            <person name="Ferro M.I.T."/>
            <person name="Formighieri E.F."/>
            <person name="Franco M.C."/>
            <person name="Greggio C.C."/>
            <person name="Gruber A."/>
            <person name="Katsuyama A.M."/>
            <person name="Kishi L.T."/>
            <person name="Leite R.P."/>
            <person name="Lemos E.G.M."/>
            <person name="Lemos M.V.F."/>
            <person name="Locali E.C."/>
            <person name="Machado M.A."/>
            <person name="Madeira A.M.B.N."/>
            <person name="Martinez-Rossi N.M."/>
            <person name="Martins E.C."/>
            <person name="Meidanis J."/>
            <person name="Menck C.F.M."/>
            <person name="Miyaki C.Y."/>
            <person name="Moon D.H."/>
            <person name="Moreira L.M."/>
            <person name="Novo M.T.M."/>
            <person name="Okura V.K."/>
            <person name="Oliveira M.C."/>
            <person name="Oliveira V.R."/>
            <person name="Pereira H.A."/>
            <person name="Rossi A."/>
            <person name="Sena J.A.D."/>
            <person name="Silva C."/>
            <person name="de Souza R.F."/>
            <person name="Spinola L.A.F."/>
            <person name="Takita M.A."/>
            <person name="Tamura R.E."/>
            <person name="Teixeira E.C."/>
            <person name="Tezza R.I.D."/>
            <person name="Trindade dos Santos M."/>
            <person name="Truffi D."/>
            <person name="Tsai S.M."/>
            <person name="White F.F."/>
            <person name="Setubal J.C."/>
            <person name="Kitajima J.P."/>
        </authorList>
    </citation>
    <scope>NUCLEOTIDE SEQUENCE [LARGE SCALE GENOMIC DNA]</scope>
    <source>
        <strain>ATCC 33913 / DSM 3586 / NCPPB 528 / LMG 568 / P 25</strain>
    </source>
</reference>
<keyword id="KW-0131">Cell cycle</keyword>
<keyword id="KW-0132">Cell division</keyword>
<keyword id="KW-0997">Cell inner membrane</keyword>
<keyword id="KW-1003">Cell membrane</keyword>
<keyword id="KW-0472">Membrane</keyword>
<keyword id="KW-1185">Reference proteome</keyword>
<keyword id="KW-0812">Transmembrane</keyword>
<keyword id="KW-1133">Transmembrane helix</keyword>
<organism>
    <name type="scientific">Xanthomonas campestris pv. campestris (strain ATCC 33913 / DSM 3586 / NCPPB 528 / LMG 568 / P 25)</name>
    <dbReference type="NCBI Taxonomy" id="190485"/>
    <lineage>
        <taxon>Bacteria</taxon>
        <taxon>Pseudomonadati</taxon>
        <taxon>Pseudomonadota</taxon>
        <taxon>Gammaproteobacteria</taxon>
        <taxon>Lysobacterales</taxon>
        <taxon>Lysobacteraceae</taxon>
        <taxon>Xanthomonas</taxon>
    </lineage>
</organism>
<protein>
    <recommendedName>
        <fullName evidence="1">Cell division protein FtsL</fullName>
    </recommendedName>
</protein>
<comment type="function">
    <text evidence="1">Essential cell division protein. May link together the upstream cell division proteins, which are predominantly cytoplasmic, with the downstream cell division proteins, which are predominantly periplasmic.</text>
</comment>
<comment type="subunit">
    <text evidence="1">Part of a complex composed of FtsB, FtsL and FtsQ.</text>
</comment>
<comment type="subcellular location">
    <subcellularLocation>
        <location evidence="1">Cell inner membrane</location>
        <topology evidence="1">Single-pass type II membrane protein</topology>
    </subcellularLocation>
    <text evidence="1">Localizes to the division septum where it forms a ring structure.</text>
</comment>
<comment type="similarity">
    <text evidence="1">Belongs to the FtsL family.</text>
</comment>